<reference evidence="9" key="1">
    <citation type="journal article" date="1998" name="Nature">
        <title>Deciphering the biology of Mycobacterium tuberculosis from the complete genome sequence.</title>
        <authorList>
            <person name="Cole S.T."/>
            <person name="Brosch R."/>
            <person name="Parkhill J."/>
            <person name="Garnier T."/>
            <person name="Churcher C.M."/>
            <person name="Harris D.E."/>
            <person name="Gordon S.V."/>
            <person name="Eiglmeier K."/>
            <person name="Gas S."/>
            <person name="Barry C.E. III"/>
            <person name="Tekaia F."/>
            <person name="Badcock K."/>
            <person name="Basham D."/>
            <person name="Brown D."/>
            <person name="Chillingworth T."/>
            <person name="Connor R."/>
            <person name="Davies R.M."/>
            <person name="Devlin K."/>
            <person name="Feltwell T."/>
            <person name="Gentles S."/>
            <person name="Hamlin N."/>
            <person name="Holroyd S."/>
            <person name="Hornsby T."/>
            <person name="Jagels K."/>
            <person name="Krogh A."/>
            <person name="McLean J."/>
            <person name="Moule S."/>
            <person name="Murphy L.D."/>
            <person name="Oliver S."/>
            <person name="Osborne J."/>
            <person name="Quail M.A."/>
            <person name="Rajandream M.A."/>
            <person name="Rogers J."/>
            <person name="Rutter S."/>
            <person name="Seeger K."/>
            <person name="Skelton S."/>
            <person name="Squares S."/>
            <person name="Squares R."/>
            <person name="Sulston J.E."/>
            <person name="Taylor K."/>
            <person name="Whitehead S."/>
            <person name="Barrell B.G."/>
        </authorList>
    </citation>
    <scope>NUCLEOTIDE SEQUENCE [LARGE SCALE GENOMIC DNA]</scope>
    <source>
        <strain>ATCC 25618 / H37Rv</strain>
    </source>
</reference>
<reference evidence="11" key="2">
    <citation type="journal article" date="2011" name="Mol. Cell. Proteomics">
        <title>Proteogenomic analysis of Mycobacterium tuberculosis by high resolution mass spectrometry.</title>
        <authorList>
            <person name="Kelkar D.S."/>
            <person name="Kumar D."/>
            <person name="Kumar P."/>
            <person name="Balakrishnan L."/>
            <person name="Muthusamy B."/>
            <person name="Yadav A.K."/>
            <person name="Shrivastava P."/>
            <person name="Marimuthu A."/>
            <person name="Anand S."/>
            <person name="Sundaram H."/>
            <person name="Kingsbury R."/>
            <person name="Harsha H.C."/>
            <person name="Nair B."/>
            <person name="Prasad T.S."/>
            <person name="Chauhan D.S."/>
            <person name="Katoch K."/>
            <person name="Katoch V.M."/>
            <person name="Kumar P."/>
            <person name="Chaerkady R."/>
            <person name="Ramachandran S."/>
            <person name="Dash D."/>
            <person name="Pandey A."/>
        </authorList>
    </citation>
    <scope>PROTEIN SEQUENCE OF 26-31; 34-44; 35-66; 70-93 AND 96-101</scope>
    <scope>IDENTIFICATION BY MASS SPECTROMETRY [LARGE SCALE ANALYSIS]</scope>
    <source>
        <strain>ATCC 25618 / H37Rv</strain>
    </source>
</reference>
<reference key="3">
    <citation type="journal article" date="2013" name="PLoS ONE">
        <title>Integration host factor of Mycobacterium tuberculosis, mIHF, compacts DNA by a bending mechanism.</title>
        <authorList>
            <person name="Mishra A."/>
            <person name="Vij M."/>
            <person name="Kumar D."/>
            <person name="Taneja V."/>
            <person name="Mondal A.K."/>
            <person name="Bothra A."/>
            <person name="Rao V."/>
            <person name="Ganguli M."/>
            <person name="Taneja B."/>
        </authorList>
    </citation>
    <scope>FUNCTION</scope>
    <scope>SUBUNIT</scope>
    <scope>DNA-BINDING</scope>
    <source>
        <strain>ATCC 25618 / H37Rv</strain>
    </source>
</reference>
<reference key="4">
    <citation type="journal article" date="2018" name="Sci. Rep.">
        <title>Essential Nucleoid Associated Protein mIHF (Rv1388) Controls Virulence and Housekeeping Genes in Mycobacterium tuberculosis.</title>
        <authorList>
            <person name="Odermatt N.T."/>
            <person name="Sala C."/>
            <person name="Benjak A."/>
            <person name="Cole S.T."/>
        </authorList>
    </citation>
    <scope>SEQUENCE REVISION TO N-TERMINUS</scope>
    <scope>SUBCELLULAR LOCATION</scope>
    <scope>INDUCTION</scope>
    <scope>DISRUPTION PHENOTYPE</scope>
    <scope>DNA-BINDING</scope>
    <source>
        <strain>ATCC 25618 / H37Rv</strain>
    </source>
</reference>
<reference evidence="10" key="5">
    <citation type="journal article" date="2020" name="J. Struct. Biol.">
        <title>Structural and DNA binding properties of mycobacterial integration host factor mIHF.</title>
        <authorList>
            <person name="Odermatt N.T."/>
            <person name="Lelli M."/>
            <person name="Herrmann T."/>
            <person name="Abriata L.A."/>
            <person name="Japaridze A."/>
            <person name="Voilquin H."/>
            <person name="Singh R."/>
            <person name="Piton J."/>
            <person name="Emsley L."/>
            <person name="Dietler G."/>
            <person name="Cole S.T."/>
        </authorList>
    </citation>
    <scope>STRUCTURE BY NMR OF 1-105</scope>
    <scope>FUNCTION</scope>
    <scope>DNA-BINDING</scope>
    <scope>MUTAGENESIS OF ARG-86; ARG-88 AND GLY-89</scope>
</reference>
<protein>
    <recommendedName>
        <fullName evidence="7">Integration host factor</fullName>
    </recommendedName>
    <alternativeName>
        <fullName evidence="5">Mycobacterium integration host factor</fullName>
        <shortName evidence="5">mIHF</shortName>
    </alternativeName>
</protein>
<accession>P71658</accession>
<accession>F2GF57</accession>
<accession>I6Y6F1</accession>
<accession>L0T6Q3</accession>
<proteinExistence type="evidence at protein level"/>
<keyword id="KW-0002">3D-structure</keyword>
<keyword id="KW-0010">Activator</keyword>
<keyword id="KW-0963">Cytoplasm</keyword>
<keyword id="KW-0903">Direct protein sequencing</keyword>
<keyword id="KW-0226">DNA condensation</keyword>
<keyword id="KW-0238">DNA-binding</keyword>
<keyword id="KW-1185">Reference proteome</keyword>
<keyword id="KW-0678">Repressor</keyword>
<keyword id="KW-0804">Transcription</keyword>
<keyword id="KW-0805">Transcription regulation</keyword>
<dbReference type="EMBL" id="AL123456">
    <property type="protein sequence ID" value="CCP44147.1"/>
    <property type="status" value="ALT_INIT"/>
    <property type="molecule type" value="Genomic_DNA"/>
</dbReference>
<dbReference type="RefSeq" id="NP_215904.1">
    <property type="nucleotide sequence ID" value="NC_000962.3"/>
</dbReference>
<dbReference type="RefSeq" id="WP_003407240.1">
    <property type="nucleotide sequence ID" value="NZ_NVQJ01000050.1"/>
</dbReference>
<dbReference type="RefSeq" id="WP_003898857.1">
    <property type="nucleotide sequence ID" value="NC_000962.3"/>
</dbReference>
<dbReference type="PDB" id="6TOB">
    <property type="method" value="NMR"/>
    <property type="chains" value="A=1-105"/>
</dbReference>
<dbReference type="PDBsum" id="6TOB"/>
<dbReference type="SMR" id="P71658"/>
<dbReference type="STRING" id="83332.Rv1388"/>
<dbReference type="PaxDb" id="83332-Rv1388"/>
<dbReference type="DNASU" id="886751"/>
<dbReference type="GeneID" id="886751"/>
<dbReference type="GeneID" id="93494320"/>
<dbReference type="KEGG" id="mtu:Rv1388"/>
<dbReference type="PATRIC" id="fig|83332.111.peg.1547"/>
<dbReference type="TubercuList" id="Rv1388"/>
<dbReference type="eggNOG" id="COG0099">
    <property type="taxonomic scope" value="Bacteria"/>
</dbReference>
<dbReference type="OrthoDB" id="3197442at2"/>
<dbReference type="PhylomeDB" id="P71658"/>
<dbReference type="PHI-base" id="PHI:7585"/>
<dbReference type="Proteomes" id="UP000001584">
    <property type="component" value="Chromosome"/>
</dbReference>
<dbReference type="GO" id="GO:0005829">
    <property type="term" value="C:cytosol"/>
    <property type="evidence" value="ECO:0007005"/>
    <property type="project" value="MTBBASE"/>
</dbReference>
<dbReference type="GO" id="GO:0009274">
    <property type="term" value="C:peptidoglycan-based cell wall"/>
    <property type="evidence" value="ECO:0007005"/>
    <property type="project" value="MTBBASE"/>
</dbReference>
<dbReference type="GO" id="GO:0005886">
    <property type="term" value="C:plasma membrane"/>
    <property type="evidence" value="ECO:0007005"/>
    <property type="project" value="MTBBASE"/>
</dbReference>
<dbReference type="GO" id="GO:0003677">
    <property type="term" value="F:DNA binding"/>
    <property type="evidence" value="ECO:0007669"/>
    <property type="project" value="UniProtKB-KW"/>
</dbReference>
<dbReference type="GO" id="GO:0030261">
    <property type="term" value="P:chromosome condensation"/>
    <property type="evidence" value="ECO:0007669"/>
    <property type="project" value="UniProtKB-KW"/>
</dbReference>
<dbReference type="FunFam" id="1.10.8.50:FF:000004">
    <property type="entry name" value="Integration host factor"/>
    <property type="match status" value="1"/>
</dbReference>
<dbReference type="Gene3D" id="1.10.8.50">
    <property type="match status" value="1"/>
</dbReference>
<dbReference type="InterPro" id="IPR055201">
    <property type="entry name" value="IHF-like_H2TH"/>
</dbReference>
<dbReference type="InterPro" id="IPR047806">
    <property type="entry name" value="IHF_actinobact"/>
</dbReference>
<dbReference type="InterPro" id="IPR010979">
    <property type="entry name" value="Ribosomal_uS13-like_H2TH"/>
</dbReference>
<dbReference type="NCBIfam" id="NF041260">
    <property type="entry name" value="actino_IHF"/>
    <property type="match status" value="1"/>
</dbReference>
<dbReference type="Pfam" id="PF22525">
    <property type="entry name" value="H2TH_5"/>
    <property type="match status" value="1"/>
</dbReference>
<dbReference type="SUPFAM" id="SSF46946">
    <property type="entry name" value="S13-like H2TH domain"/>
    <property type="match status" value="1"/>
</dbReference>
<organism>
    <name type="scientific">Mycobacterium tuberculosis (strain ATCC 25618 / H37Rv)</name>
    <dbReference type="NCBI Taxonomy" id="83332"/>
    <lineage>
        <taxon>Bacteria</taxon>
        <taxon>Bacillati</taxon>
        <taxon>Actinomycetota</taxon>
        <taxon>Actinomycetes</taxon>
        <taxon>Mycobacteriales</taxon>
        <taxon>Mycobacteriaceae</taxon>
        <taxon>Mycobacterium</taxon>
        <taxon>Mycobacterium tuberculosis complex</taxon>
    </lineage>
</organism>
<sequence length="105" mass="11506">MALPQLTDEQRAAALEKAAAARRARAELKDRLKRGGTNLTQVLKDAESDEVLGKMKVSALLEALPKVGKVKAQEIMTELEIAPTRRLRGLGDRQRKALLEKFGSA</sequence>
<feature type="chain" id="PRO_0000458543" description="Integration host factor">
    <location>
        <begin position="1"/>
        <end position="105"/>
    </location>
</feature>
<feature type="region of interest" description="Lid, binds DNA" evidence="1">
    <location>
        <begin position="82"/>
        <end position="94"/>
    </location>
</feature>
<feature type="short sequence motif" description="H2TH motif, binds DNA" evidence="1">
    <location>
        <begin position="64"/>
        <end position="71"/>
    </location>
</feature>
<feature type="mutagenesis site" description="Decreased ability to bind dsDNA, unwinds but does not collapse cosmid DNA." evidence="4">
    <original>R</original>
    <variation>E</variation>
    <location>
        <position position="86"/>
    </location>
</feature>
<feature type="mutagenesis site" description="Protein is unstable." evidence="4">
    <original>R</original>
    <variation>E</variation>
    <location>
        <position position="88"/>
    </location>
</feature>
<feature type="mutagenesis site" description="Protein is unstable." evidence="4">
    <original>G</original>
    <variation>W</variation>
    <location>
        <position position="89"/>
    </location>
</feature>
<feature type="helix" evidence="12">
    <location>
        <begin position="8"/>
        <end position="10"/>
    </location>
</feature>
<feature type="turn" evidence="12">
    <location>
        <begin position="11"/>
        <end position="16"/>
    </location>
</feature>
<feature type="helix" evidence="12">
    <location>
        <begin position="17"/>
        <end position="23"/>
    </location>
</feature>
<feature type="helix" evidence="12">
    <location>
        <begin position="26"/>
        <end position="34"/>
    </location>
</feature>
<feature type="helix" evidence="12">
    <location>
        <begin position="39"/>
        <end position="45"/>
    </location>
</feature>
<feature type="turn" evidence="12">
    <location>
        <begin position="46"/>
        <end position="48"/>
    </location>
</feature>
<feature type="helix" evidence="12">
    <location>
        <begin position="52"/>
        <end position="54"/>
    </location>
</feature>
<feature type="helix" evidence="12">
    <location>
        <begin position="57"/>
        <end position="62"/>
    </location>
</feature>
<feature type="helix" evidence="12">
    <location>
        <begin position="69"/>
        <end position="79"/>
    </location>
</feature>
<feature type="strand" evidence="12">
    <location>
        <begin position="86"/>
        <end position="89"/>
    </location>
</feature>
<feature type="helix" evidence="12">
    <location>
        <begin position="93"/>
        <end position="102"/>
    </location>
</feature>
<comment type="function">
    <text evidence="2 3 4">A nucleoid-associated protein (NAP) required for septum formation and normal cell division as well as for DNA segregation. Binds about 135 sites across the chromosome, most of which are genes involved in virulence; most DNA-binding sites are immediately upstream of transcription start sites. When mIHF is depleted most of the genes are down-regulated (PubMed:30242166). Binds supercoiled and linear dsDNA in a concentration-dependent manner, probably non-sequence specifically. Binding compacts DNA, protecting it from degradation. Initial binding to supercoiled DNA opens it fully, followed by bending and compaction. Bends and thus compacts linear DNA (PubMed:23922883). Binds DNA via 2 sites, forms left-handed loops on linear DNA; at low concentrations unwinds larger cosmids (42.6 kb) then collapses and condenses DNA as protein levels rise. Forms mostly left-handed loops on condensing cosmid DNA (PubMed:31846718).</text>
</comment>
<comment type="subunit">
    <text evidence="1 8">Homodimer in solution (Probable). Binds DNA as a monomer (By similarity).</text>
</comment>
<comment type="subcellular location">
    <subcellularLocation>
        <location evidence="3">Cytoplasm</location>
    </subcellularLocation>
</comment>
<comment type="induction">
    <text evidence="3">Expressed at all stage of growth (at protein level).</text>
</comment>
<comment type="domain">
    <text evidence="4">Forms a globular protein with 5 short alpha-helies and an extended N-terminus.</text>
</comment>
<comment type="disruption phenotype">
    <text evidence="3">Essential, it cannot be deleted. Depletion of mIHF is bactericidal, and compromises DNA, RNA and protein synthesis. Cells depleted of mIHF are about 2.3-fold longer than wild-type, have no septa and only 1 nucleoid. Regulation of many genes is altered (both up- and down-regulation occurs).</text>
</comment>
<comment type="similarity">
    <text evidence="7">Belongs to the actinobacterial IHF (aIHF) family.</text>
</comment>
<comment type="sequence caution" evidence="7">
    <conflict type="erroneous initiation">
        <sequence resource="EMBL-CDS" id="CCP44147"/>
    </conflict>
    <text>Extended N-terminus.</text>
</comment>
<name>IHF_MYCTU</name>
<evidence type="ECO:0000250" key="1">
    <source>
        <dbReference type="UniProtKB" id="Q9KXR9"/>
    </source>
</evidence>
<evidence type="ECO:0000269" key="2">
    <source>
    </source>
</evidence>
<evidence type="ECO:0000269" key="3">
    <source>
    </source>
</evidence>
<evidence type="ECO:0000269" key="4">
    <source>
    </source>
</evidence>
<evidence type="ECO:0000303" key="5">
    <source>
    </source>
</evidence>
<evidence type="ECO:0000303" key="6">
    <source>
    </source>
</evidence>
<evidence type="ECO:0000305" key="7"/>
<evidence type="ECO:0000305" key="8">
    <source>
    </source>
</evidence>
<evidence type="ECO:0000312" key="9">
    <source>
        <dbReference type="EMBL" id="CCP44147.1"/>
    </source>
</evidence>
<evidence type="ECO:0007744" key="10">
    <source>
        <dbReference type="PDB" id="6TOB"/>
    </source>
</evidence>
<evidence type="ECO:0007744" key="11">
    <source>
    </source>
</evidence>
<evidence type="ECO:0007829" key="12">
    <source>
        <dbReference type="PDB" id="6TOB"/>
    </source>
</evidence>
<gene>
    <name evidence="6" type="primary">mihF</name>
    <name evidence="9" type="ordered locus">Rv1388</name>
</gene>